<keyword id="KW-0106">Calcium</keyword>
<keyword id="KW-1015">Disulfide bond</keyword>
<keyword id="KW-1199">Hemostasis impairing toxin</keyword>
<keyword id="KW-0378">Hydrolase</keyword>
<keyword id="KW-0442">Lipid degradation</keyword>
<keyword id="KW-0443">Lipid metabolism</keyword>
<keyword id="KW-0479">Metal-binding</keyword>
<keyword id="KW-1201">Platelet aggregation inhibiting toxin</keyword>
<keyword id="KW-0964">Secreted</keyword>
<keyword id="KW-0732">Signal</keyword>
<keyword id="KW-0800">Toxin</keyword>
<reference key="1">
    <citation type="journal article" date="2000" name="Arch. Biochem. Biophys.">
        <title>Phospholipase A(2) with platelet aggregation inhibitor activity from Austrelaps superbus venom: protein purification and cDNA cloning.</title>
        <authorList>
            <person name="Singh S.B."/>
            <person name="Armugam A."/>
            <person name="Kini R.M."/>
            <person name="Jeyaseelan K."/>
        </authorList>
    </citation>
    <scope>NUCLEOTIDE SEQUENCE [MRNA]</scope>
    <source>
        <tissue>Venom gland</tissue>
    </source>
</reference>
<organism>
    <name type="scientific">Austrelaps superbus</name>
    <name type="common">Lowland copperhead snake</name>
    <name type="synonym">Hoplocephalus superbus</name>
    <dbReference type="NCBI Taxonomy" id="29156"/>
    <lineage>
        <taxon>Eukaryota</taxon>
        <taxon>Metazoa</taxon>
        <taxon>Chordata</taxon>
        <taxon>Craniata</taxon>
        <taxon>Vertebrata</taxon>
        <taxon>Euteleostomi</taxon>
        <taxon>Lepidosauria</taxon>
        <taxon>Squamata</taxon>
        <taxon>Bifurcata</taxon>
        <taxon>Unidentata</taxon>
        <taxon>Episquamata</taxon>
        <taxon>Toxicofera</taxon>
        <taxon>Serpentes</taxon>
        <taxon>Colubroidea</taxon>
        <taxon>Elapidae</taxon>
        <taxon>Hydrophiinae</taxon>
        <taxon>Austrelaps</taxon>
    </lineage>
</organism>
<comment type="function">
    <text evidence="1">Snake venom phospholipase A2 (PLA2) that inhibits collagen-induced platelet aggregation. PLA2 catalyzes the calcium-dependent hydrolysis of the 2-acyl groups in 3-sn-phosphoglycerides (By similarity).</text>
</comment>
<comment type="catalytic activity">
    <reaction evidence="3">
        <text>a 1,2-diacyl-sn-glycero-3-phosphocholine + H2O = a 1-acyl-sn-glycero-3-phosphocholine + a fatty acid + H(+)</text>
        <dbReference type="Rhea" id="RHEA:15801"/>
        <dbReference type="ChEBI" id="CHEBI:15377"/>
        <dbReference type="ChEBI" id="CHEBI:15378"/>
        <dbReference type="ChEBI" id="CHEBI:28868"/>
        <dbReference type="ChEBI" id="CHEBI:57643"/>
        <dbReference type="ChEBI" id="CHEBI:58168"/>
        <dbReference type="EC" id="3.1.1.4"/>
    </reaction>
</comment>
<comment type="cofactor">
    <cofactor evidence="1">
        <name>Ca(2+)</name>
        <dbReference type="ChEBI" id="CHEBI:29108"/>
    </cofactor>
    <text evidence="1">Binds 1 Ca(2+) ion.</text>
</comment>
<comment type="subcellular location">
    <subcellularLocation>
        <location evidence="1">Secreted</location>
    </subcellularLocation>
</comment>
<comment type="tissue specificity">
    <text>Expressed by the venom gland.</text>
</comment>
<comment type="PTM">
    <text>This enzyme lacks one of the seven disulfide bonds found in similar PLA2 proteins.</text>
</comment>
<comment type="similarity">
    <text evidence="4">Belongs to the phospholipase A2 family. Group I subfamily. D49 sub-subfamily.</text>
</comment>
<evidence type="ECO:0000250" key="1"/>
<evidence type="ECO:0000255" key="2"/>
<evidence type="ECO:0000255" key="3">
    <source>
        <dbReference type="PROSITE-ProRule" id="PRU10036"/>
    </source>
</evidence>
<evidence type="ECO:0000305" key="4"/>
<dbReference type="EC" id="3.1.1.4"/>
<dbReference type="EMBL" id="AF184142">
    <property type="protein sequence ID" value="AAD56409.1"/>
    <property type="molecule type" value="mRNA"/>
</dbReference>
<dbReference type="SMR" id="Q9PUG8"/>
<dbReference type="GO" id="GO:0005576">
    <property type="term" value="C:extracellular region"/>
    <property type="evidence" value="ECO:0007669"/>
    <property type="project" value="UniProtKB-SubCell"/>
</dbReference>
<dbReference type="GO" id="GO:0005509">
    <property type="term" value="F:calcium ion binding"/>
    <property type="evidence" value="ECO:0007669"/>
    <property type="project" value="InterPro"/>
</dbReference>
<dbReference type="GO" id="GO:0047498">
    <property type="term" value="F:calcium-dependent phospholipase A2 activity"/>
    <property type="evidence" value="ECO:0007669"/>
    <property type="project" value="TreeGrafter"/>
</dbReference>
<dbReference type="GO" id="GO:0005543">
    <property type="term" value="F:phospholipid binding"/>
    <property type="evidence" value="ECO:0007669"/>
    <property type="project" value="TreeGrafter"/>
</dbReference>
<dbReference type="GO" id="GO:0005102">
    <property type="term" value="F:signaling receptor binding"/>
    <property type="evidence" value="ECO:0007669"/>
    <property type="project" value="TreeGrafter"/>
</dbReference>
<dbReference type="GO" id="GO:0090729">
    <property type="term" value="F:toxin activity"/>
    <property type="evidence" value="ECO:0007669"/>
    <property type="project" value="UniProtKB-KW"/>
</dbReference>
<dbReference type="GO" id="GO:0050482">
    <property type="term" value="P:arachidonate secretion"/>
    <property type="evidence" value="ECO:0007669"/>
    <property type="project" value="InterPro"/>
</dbReference>
<dbReference type="GO" id="GO:0006633">
    <property type="term" value="P:fatty acid biosynthetic process"/>
    <property type="evidence" value="ECO:0007669"/>
    <property type="project" value="TreeGrafter"/>
</dbReference>
<dbReference type="GO" id="GO:0016042">
    <property type="term" value="P:lipid catabolic process"/>
    <property type="evidence" value="ECO:0007669"/>
    <property type="project" value="UniProtKB-KW"/>
</dbReference>
<dbReference type="GO" id="GO:0006644">
    <property type="term" value="P:phospholipid metabolic process"/>
    <property type="evidence" value="ECO:0007669"/>
    <property type="project" value="InterPro"/>
</dbReference>
<dbReference type="GO" id="GO:0048146">
    <property type="term" value="P:positive regulation of fibroblast proliferation"/>
    <property type="evidence" value="ECO:0007669"/>
    <property type="project" value="TreeGrafter"/>
</dbReference>
<dbReference type="CDD" id="cd00125">
    <property type="entry name" value="PLA2c"/>
    <property type="match status" value="1"/>
</dbReference>
<dbReference type="FunFam" id="1.20.90.10:FF:000011">
    <property type="entry name" value="Phospholipase A(2)"/>
    <property type="match status" value="1"/>
</dbReference>
<dbReference type="Gene3D" id="1.20.90.10">
    <property type="entry name" value="Phospholipase A2 domain"/>
    <property type="match status" value="1"/>
</dbReference>
<dbReference type="InterPro" id="IPR001211">
    <property type="entry name" value="PLipase_A2"/>
</dbReference>
<dbReference type="InterPro" id="IPR033112">
    <property type="entry name" value="PLipase_A2_Asp_AS"/>
</dbReference>
<dbReference type="InterPro" id="IPR016090">
    <property type="entry name" value="PLipase_A2_dom"/>
</dbReference>
<dbReference type="InterPro" id="IPR036444">
    <property type="entry name" value="PLipase_A2_dom_sf"/>
</dbReference>
<dbReference type="PANTHER" id="PTHR11716:SF94">
    <property type="entry name" value="PHOSPHOLIPASE A2"/>
    <property type="match status" value="1"/>
</dbReference>
<dbReference type="PANTHER" id="PTHR11716">
    <property type="entry name" value="PHOSPHOLIPASE A2 FAMILY MEMBER"/>
    <property type="match status" value="1"/>
</dbReference>
<dbReference type="Pfam" id="PF00068">
    <property type="entry name" value="Phospholip_A2_1"/>
    <property type="match status" value="1"/>
</dbReference>
<dbReference type="PRINTS" id="PR00389">
    <property type="entry name" value="PHPHLIPASEA2"/>
</dbReference>
<dbReference type="SMART" id="SM00085">
    <property type="entry name" value="PA2c"/>
    <property type="match status" value="1"/>
</dbReference>
<dbReference type="SUPFAM" id="SSF48619">
    <property type="entry name" value="Phospholipase A2, PLA2"/>
    <property type="match status" value="1"/>
</dbReference>
<dbReference type="PROSITE" id="PS00119">
    <property type="entry name" value="PA2_ASP"/>
    <property type="match status" value="1"/>
</dbReference>
<accession>Q9PUG8</accession>
<proteinExistence type="evidence at transcript level"/>
<protein>
    <recommendedName>
        <fullName>Acidic phospholipase A2 S16-19</fullName>
        <shortName>svPLA2</shortName>
        <ecNumber>3.1.1.4</ecNumber>
    </recommendedName>
    <alternativeName>
        <fullName>ASPLA16</fullName>
    </alternativeName>
    <alternativeName>
        <fullName>Phosphatidylcholine 2-acylhydrolase</fullName>
    </alternativeName>
</protein>
<name>PA2AG_AUSSU</name>
<sequence>MYPAHLLVLLAVCVSLLGASNIPLPSLDFEQFGKMIQCTIPCEESCLAYMDYGCYCGPGGSGTPLDELDRCRQTHDNCYAEAGKLPACKAMLSEPYNDTYSYGCIERQLTCNDDNDECKAFICNCDRAAVICFSGAPYNDSNYDIGTIEHCK</sequence>
<feature type="signal peptide" evidence="2">
    <location>
        <begin position="1"/>
        <end position="19"/>
    </location>
</feature>
<feature type="propeptide" id="PRO_0000022815" evidence="2">
    <location>
        <begin position="20"/>
        <end position="27"/>
    </location>
</feature>
<feature type="chain" id="PRO_0000022816" description="Acidic phospholipase A2 S16-19">
    <location>
        <begin position="28"/>
        <end position="152"/>
    </location>
</feature>
<feature type="active site" evidence="3">
    <location>
        <position position="75"/>
    </location>
</feature>
<feature type="active site" evidence="3">
    <location>
        <position position="126"/>
    </location>
</feature>
<feature type="binding site" evidence="1">
    <location>
        <position position="55"/>
    </location>
    <ligand>
        <name>Ca(2+)</name>
        <dbReference type="ChEBI" id="CHEBI:29108"/>
    </ligand>
</feature>
<feature type="binding site" evidence="1">
    <location>
        <position position="57"/>
    </location>
    <ligand>
        <name>Ca(2+)</name>
        <dbReference type="ChEBI" id="CHEBI:29108"/>
    </ligand>
</feature>
<feature type="binding site" evidence="1">
    <location>
        <position position="59"/>
    </location>
    <ligand>
        <name>Ca(2+)</name>
        <dbReference type="ChEBI" id="CHEBI:29108"/>
    </ligand>
</feature>
<feature type="binding site" evidence="1">
    <location>
        <position position="76"/>
    </location>
    <ligand>
        <name>Ca(2+)</name>
        <dbReference type="ChEBI" id="CHEBI:29108"/>
    </ligand>
</feature>
<feature type="disulfide bond" evidence="1">
    <location>
        <begin position="38"/>
        <end position="104"/>
    </location>
</feature>
<feature type="disulfide bond" evidence="1">
    <location>
        <begin position="54"/>
        <end position="151"/>
    </location>
</feature>
<feature type="disulfide bond" evidence="1">
    <location>
        <begin position="71"/>
        <end position="132"/>
    </location>
</feature>
<feature type="disulfide bond" evidence="1">
    <location>
        <begin position="78"/>
        <end position="125"/>
    </location>
</feature>
<feature type="disulfide bond" evidence="1">
    <location>
        <begin position="88"/>
        <end position="118"/>
    </location>
</feature>
<feature type="disulfide bond" evidence="1">
    <location>
        <begin position="111"/>
        <end position="123"/>
    </location>
</feature>